<accession>P32260</accession>
<accession>Q33137</accession>
<reference key="1">
    <citation type="journal article" date="1993" name="FEBS Lett.">
        <title>cDNA cloning and expression of cysteine synthase B localized in chloroplasts of Spinacia oleracea.</title>
        <authorList>
            <person name="Saito K."/>
            <person name="Tatsuguchi K."/>
            <person name="Murakoshi I."/>
            <person name="Hirano H."/>
        </authorList>
    </citation>
    <scope>NUCLEOTIDE SEQUENCE [MRNA]</scope>
</reference>
<reference key="2">
    <citation type="journal article" date="1993" name="Arch. Biochem. Biophys.">
        <title>O-acetylserine(thiol)lyase from spinach (Spinacia oleracea L.) leaf: cDNA cloning, characterization, and overexpression in Escherichia coli of the chloroplast isoform.</title>
        <authorList>
            <person name="Rolland N."/>
            <person name="Droux M."/>
            <person name="Lebrun M."/>
            <person name="Douce R."/>
        </authorList>
    </citation>
    <scope>NUCLEOTIDE SEQUENCE [MRNA]</scope>
    <source>
        <tissue>Leaf</tissue>
    </source>
</reference>
<reference key="3">
    <citation type="journal article" date="1993" name="Plant Physiol.">
        <title>An O-acetylserine (thiol) lyase cDNA from spinach.</title>
        <authorList>
            <person name="Hell R."/>
            <person name="Schuster G."/>
            <person name="Gruissem W."/>
        </authorList>
    </citation>
    <scope>NUCLEOTIDE SEQUENCE [MRNA]</scope>
    <source>
        <strain>cv. Marathon</strain>
        <tissue>Leaf</tissue>
    </source>
</reference>
<reference key="4">
    <citation type="journal article" date="1996" name="Eur. J. Biochem.">
        <title>Spinach chloroplast O-acetylserine (thiol)-lyase exhibits two catalytically non-equivalent pyridoxal-5'-phosphate-containing active sites.</title>
        <authorList>
            <person name="Rolland N."/>
            <person name="Ruffet M.-L."/>
            <person name="Job D."/>
            <person name="Douce R."/>
            <person name="Droux M."/>
        </authorList>
    </citation>
    <scope>PARTIAL PROTEIN SEQUENCE</scope>
    <scope>CHARACTERIZATION</scope>
</reference>
<reference key="5">
    <citation type="journal article" date="1992" name="Arch. Biochem. Biophys.">
        <title>Purification and characterization of O-acetylserine (thiol) lyase from spinach chloroplasts.</title>
        <authorList>
            <person name="Droux M."/>
            <person name="Martin J."/>
            <person name="Sajus P."/>
            <person name="Douce R."/>
        </authorList>
    </citation>
    <scope>PROTEIN SEQUENCE OF 53-65</scope>
    <scope>CHARACTERIZATION</scope>
</reference>
<reference key="6">
    <citation type="journal article" date="1993" name="Biochem. J.">
        <title>Common sequence motifs coding for higher-plant and prokaryotic O-acetylserine (thiol)-lyases: bacterial origin of a chloroplast transit peptide?</title>
        <authorList>
            <person name="Rolland N."/>
            <person name="Job D."/>
            <person name="Douce R."/>
        </authorList>
    </citation>
    <scope>DISCUSSION OF SEQUENCE</scope>
</reference>
<feature type="transit peptide" description="Chloroplast and chromoplast" evidence="2">
    <location>
        <begin position="1"/>
        <end position="52"/>
    </location>
</feature>
<feature type="chain" id="PRO_0000006352" description="Cysteine synthase, chloroplastic/chromoplastic">
    <location>
        <begin position="53"/>
        <end position="383"/>
    </location>
</feature>
<feature type="binding site" evidence="1">
    <location>
        <position position="139"/>
    </location>
    <ligand>
        <name>pyridoxal 5'-phosphate</name>
        <dbReference type="ChEBI" id="CHEBI:597326"/>
    </ligand>
</feature>
<feature type="binding site" evidence="1">
    <location>
        <begin position="243"/>
        <end position="247"/>
    </location>
    <ligand>
        <name>pyridoxal 5'-phosphate</name>
        <dbReference type="ChEBI" id="CHEBI:597326"/>
    </ligand>
</feature>
<feature type="binding site" evidence="1">
    <location>
        <position position="331"/>
    </location>
    <ligand>
        <name>pyridoxal 5'-phosphate</name>
        <dbReference type="ChEBI" id="CHEBI:597326"/>
    </ligand>
</feature>
<feature type="modified residue" description="N6-(pyridoxal phosphate)lysine">
    <location>
        <position position="108"/>
    </location>
</feature>
<feature type="sequence conflict" description="In Ref. 1; BAA03542." evidence="3" ref="1">
    <original>L</original>
    <variation>I</variation>
    <location>
        <position position="12"/>
    </location>
</feature>
<feature type="sequence conflict" description="In Ref. 5; AA sequence." evidence="3" ref="5">
    <location>
        <position position="58"/>
    </location>
</feature>
<feature type="sequence conflict" description="In Ref. 3." evidence="3" ref="3">
    <original>E</original>
    <variation>EKESYLE</variation>
    <location>
        <position position="166"/>
    </location>
</feature>
<feature type="sequence conflict" description="In Ref. 3; AAA16973." evidence="3" ref="3">
    <original>GRYLKER</original>
    <variation>DGTSKNA</variation>
    <location>
        <begin position="252"/>
        <end position="258"/>
    </location>
</feature>
<feature type="sequence conflict" description="In Ref. 3; AAA16973." evidence="3" ref="3">
    <original>ILSGGKP</original>
    <variation>YFLVESA</variation>
    <location>
        <begin position="274"/>
        <end position="280"/>
    </location>
</feature>
<feature type="sequence conflict" description="In Ref. 3; AAA16973." evidence="3" ref="3">
    <original>AA</original>
    <variation>RG</variation>
    <location>
        <begin position="334"/>
        <end position="335"/>
    </location>
</feature>
<feature type="sequence conflict" description="In Ref. 2; CAA47329." evidence="3" ref="2">
    <original>AA</original>
    <variation>RR</variation>
    <location>
        <begin position="334"/>
        <end position="335"/>
    </location>
</feature>
<feature type="sequence conflict" description="In Ref. 3; AAA16973." evidence="3" ref="3">
    <original>NM</original>
    <variation>KL</variation>
    <location>
        <begin position="379"/>
        <end position="380"/>
    </location>
</feature>
<feature type="sequence conflict" description="In Ref. 3; AAA16973." evidence="3" ref="3">
    <original>E</original>
    <variation>EI</variation>
    <location>
        <position position="383"/>
    </location>
</feature>
<gene>
    <name type="primary">CYSK</name>
</gene>
<dbReference type="EC" id="2.5.1.47"/>
<dbReference type="EMBL" id="D14722">
    <property type="protein sequence ID" value="BAA03542.1"/>
    <property type="molecule type" value="mRNA"/>
</dbReference>
<dbReference type="EMBL" id="X66860">
    <property type="protein sequence ID" value="CAA47329.1"/>
    <property type="molecule type" value="mRNA"/>
</dbReference>
<dbReference type="EMBL" id="L05184">
    <property type="protein sequence ID" value="AAA16973.1"/>
    <property type="molecule type" value="mRNA"/>
</dbReference>
<dbReference type="PIR" id="S29733">
    <property type="entry name" value="S29733"/>
</dbReference>
<dbReference type="PIR" id="T09000">
    <property type="entry name" value="T09000"/>
</dbReference>
<dbReference type="SMR" id="P32260"/>
<dbReference type="SABIO-RK" id="P32260"/>
<dbReference type="UniPathway" id="UPA00136">
    <property type="reaction ID" value="UER00200"/>
</dbReference>
<dbReference type="Proteomes" id="UP001155700">
    <property type="component" value="Unplaced"/>
</dbReference>
<dbReference type="GO" id="GO:0009570">
    <property type="term" value="C:chloroplast stroma"/>
    <property type="evidence" value="ECO:0007669"/>
    <property type="project" value="UniProtKB-SubCell"/>
</dbReference>
<dbReference type="GO" id="GO:0009509">
    <property type="term" value="C:chromoplast"/>
    <property type="evidence" value="ECO:0007669"/>
    <property type="project" value="UniProtKB-SubCell"/>
</dbReference>
<dbReference type="GO" id="GO:0005737">
    <property type="term" value="C:cytoplasm"/>
    <property type="evidence" value="ECO:0000318"/>
    <property type="project" value="GO_Central"/>
</dbReference>
<dbReference type="GO" id="GO:0004124">
    <property type="term" value="F:cysteine synthase activity"/>
    <property type="evidence" value="ECO:0000318"/>
    <property type="project" value="GO_Central"/>
</dbReference>
<dbReference type="GO" id="GO:0006535">
    <property type="term" value="P:cysteine biosynthetic process from serine"/>
    <property type="evidence" value="ECO:0000318"/>
    <property type="project" value="GO_Central"/>
</dbReference>
<dbReference type="GO" id="GO:0009567">
    <property type="term" value="P:double fertilization forming a zygote and endosperm"/>
    <property type="evidence" value="ECO:0000318"/>
    <property type="project" value="GO_Central"/>
</dbReference>
<dbReference type="GO" id="GO:0009860">
    <property type="term" value="P:pollen tube growth"/>
    <property type="evidence" value="ECO:0000318"/>
    <property type="project" value="GO_Central"/>
</dbReference>
<dbReference type="CDD" id="cd01561">
    <property type="entry name" value="CBS_like"/>
    <property type="match status" value="1"/>
</dbReference>
<dbReference type="FunFam" id="3.40.50.1100:FF:000006">
    <property type="entry name" value="Cysteine synthase"/>
    <property type="match status" value="1"/>
</dbReference>
<dbReference type="FunFam" id="3.40.50.1100:FF:000130">
    <property type="entry name" value="Cysteine synthase"/>
    <property type="match status" value="1"/>
</dbReference>
<dbReference type="Gene3D" id="3.40.50.1100">
    <property type="match status" value="2"/>
</dbReference>
<dbReference type="InterPro" id="IPR005856">
    <property type="entry name" value="Cys_synth"/>
</dbReference>
<dbReference type="InterPro" id="IPR050214">
    <property type="entry name" value="Cys_Synth/Cystath_Beta-Synth"/>
</dbReference>
<dbReference type="InterPro" id="IPR005859">
    <property type="entry name" value="CysK"/>
</dbReference>
<dbReference type="InterPro" id="IPR001216">
    <property type="entry name" value="P-phosphate_BS"/>
</dbReference>
<dbReference type="InterPro" id="IPR001926">
    <property type="entry name" value="TrpB-like_PALP"/>
</dbReference>
<dbReference type="InterPro" id="IPR036052">
    <property type="entry name" value="TrpB-like_PALP_sf"/>
</dbReference>
<dbReference type="NCBIfam" id="TIGR01139">
    <property type="entry name" value="cysK"/>
    <property type="match status" value="1"/>
</dbReference>
<dbReference type="NCBIfam" id="TIGR01136">
    <property type="entry name" value="cysKM"/>
    <property type="match status" value="1"/>
</dbReference>
<dbReference type="PANTHER" id="PTHR10314">
    <property type="entry name" value="CYSTATHIONINE BETA-SYNTHASE"/>
    <property type="match status" value="1"/>
</dbReference>
<dbReference type="Pfam" id="PF00291">
    <property type="entry name" value="PALP"/>
    <property type="match status" value="1"/>
</dbReference>
<dbReference type="SUPFAM" id="SSF53686">
    <property type="entry name" value="Tryptophan synthase beta subunit-like PLP-dependent enzymes"/>
    <property type="match status" value="1"/>
</dbReference>
<dbReference type="PROSITE" id="PS00901">
    <property type="entry name" value="CYS_SYNTHASE"/>
    <property type="match status" value="1"/>
</dbReference>
<keyword id="KW-0028">Amino-acid biosynthesis</keyword>
<keyword id="KW-0150">Chloroplast</keyword>
<keyword id="KW-0957">Chromoplast</keyword>
<keyword id="KW-0198">Cysteine biosynthesis</keyword>
<keyword id="KW-0903">Direct protein sequencing</keyword>
<keyword id="KW-0934">Plastid</keyword>
<keyword id="KW-0663">Pyridoxal phosphate</keyword>
<keyword id="KW-1185">Reference proteome</keyword>
<keyword id="KW-0808">Transferase</keyword>
<keyword id="KW-0809">Transit peptide</keyword>
<sequence length="383" mass="40637">MASLVNNAYAALRTSKLELREVKNLANFRVGPPSSLSCNNFKKVSSSPITCKAVSLSPPSTIEGLNIAEDVSQLIGKTPMVYLNNVSKGSVANIAAKLESMEPCCSVKDRIGYSMIDDAEQKGVITPGKTTLVEPTSGNTGIGLAFIAAARGYKITLTMPASMSMERRVILKAFGAELVLTDPAKGMKGAVEKAEEILKKTPDSYMLQQFDNPANPKIHYETTGPEIWEDTKGKVDIFVAGIGTGGTISGVGRYLKERNPGVQVIGIEPTESNILSGGKPGPHKIQGLGAGFVPSNLDLGVMDEVIEVSSEEAVEMAKQLAMKEGLLVGISSGAAAAAAVRIGKRPENAGKLIAVVFPSFGERYLSSILFQSIREECENMKPE</sequence>
<proteinExistence type="evidence at protein level"/>
<name>CYSKP_SPIOL</name>
<organism>
    <name type="scientific">Spinacia oleracea</name>
    <name type="common">Spinach</name>
    <dbReference type="NCBI Taxonomy" id="3562"/>
    <lineage>
        <taxon>Eukaryota</taxon>
        <taxon>Viridiplantae</taxon>
        <taxon>Streptophyta</taxon>
        <taxon>Embryophyta</taxon>
        <taxon>Tracheophyta</taxon>
        <taxon>Spermatophyta</taxon>
        <taxon>Magnoliopsida</taxon>
        <taxon>eudicotyledons</taxon>
        <taxon>Gunneridae</taxon>
        <taxon>Pentapetalae</taxon>
        <taxon>Caryophyllales</taxon>
        <taxon>Chenopodiaceae</taxon>
        <taxon>Chenopodioideae</taxon>
        <taxon>Anserineae</taxon>
        <taxon>Spinacia</taxon>
    </lineage>
</organism>
<evidence type="ECO:0000250" key="1"/>
<evidence type="ECO:0000269" key="2">
    <source>
    </source>
</evidence>
<evidence type="ECO:0000305" key="3"/>
<protein>
    <recommendedName>
        <fullName>Cysteine synthase, chloroplastic/chromoplastic</fullName>
        <ecNumber>2.5.1.47</ecNumber>
    </recommendedName>
    <alternativeName>
        <fullName>CSase B</fullName>
        <shortName>CS-B</shortName>
    </alternativeName>
    <alternativeName>
        <fullName>O-acetylserine (thiol)-lyase</fullName>
    </alternativeName>
    <alternativeName>
        <fullName>O-acetylserine sulfhydrylase</fullName>
    </alternativeName>
    <alternativeName>
        <fullName>OAS-TL B</fullName>
    </alternativeName>
</protein>
<comment type="catalytic activity">
    <reaction>
        <text>O-acetyl-L-serine + hydrogen sulfide = L-cysteine + acetate</text>
        <dbReference type="Rhea" id="RHEA:14829"/>
        <dbReference type="ChEBI" id="CHEBI:29919"/>
        <dbReference type="ChEBI" id="CHEBI:30089"/>
        <dbReference type="ChEBI" id="CHEBI:35235"/>
        <dbReference type="ChEBI" id="CHEBI:58340"/>
        <dbReference type="EC" id="2.5.1.47"/>
    </reaction>
</comment>
<comment type="cofactor">
    <cofactor>
        <name>pyridoxal 5'-phosphate</name>
        <dbReference type="ChEBI" id="CHEBI:597326"/>
    </cofactor>
</comment>
<comment type="biophysicochemical properties">
    <kinetics>
        <KM>1.3 mM for O-acetylserine</KM>
        <KM>0.25 mM for sulfide</KM>
    </kinetics>
    <phDependence>
        <text>Optimum pH is 7.5 to 8.5.</text>
    </phDependence>
</comment>
<comment type="pathway">
    <text>Amino-acid biosynthesis; L-cysteine biosynthesis; L-cysteine from L-serine: step 2/2.</text>
</comment>
<comment type="subunit">
    <text>Homodimer.</text>
</comment>
<comment type="subcellular location">
    <subcellularLocation>
        <location>Plastid</location>
        <location>Chloroplast stroma</location>
    </subcellularLocation>
    <subcellularLocation>
        <location>Plastid</location>
        <location>Chromoplast</location>
    </subcellularLocation>
</comment>
<comment type="similarity">
    <text evidence="3">Belongs to the cysteine synthase/cystathionine beta-synthase family.</text>
</comment>